<accession>P04478</accession>
<comment type="function">
    <text>Not known but may be related to activation of the variant surface glycoprotein genes.</text>
</comment>
<feature type="signal peptide">
    <location>
        <begin position="1"/>
        <end position="23"/>
    </location>
</feature>
<feature type="chain" id="PRO_0000021205" description="VSG expression site-associated protein 221A">
    <location>
        <begin position="24"/>
        <end position="329"/>
    </location>
</feature>
<feature type="glycosylation site" description="N-linked (GlcNAc...) asparagine" evidence="1">
    <location>
        <position position="73"/>
    </location>
</feature>
<feature type="glycosylation site" description="N-linked (GlcNAc...) asparagine" evidence="1">
    <location>
        <position position="294"/>
    </location>
</feature>
<feature type="glycosylation site" description="N-linked (GlcNAc...) asparagine" evidence="1">
    <location>
        <position position="308"/>
    </location>
</feature>
<proteinExistence type="evidence at transcript level"/>
<name>ESG2_TRYBB</name>
<evidence type="ECO:0000255" key="1"/>
<sequence>MKVEIVELVVLLFSVTCVDAWLQGADCTRVADHKEHAPVTEAVCYLRCLSDALNKLYSEGEKKLLVTEEVYANASLILDDMEGRAGESSTYLSVIRGVMEEQTDRLEKLISYGNKMGNLVAKAGGLFAALEDSLKEVRKEIPGALIKTNKYYTSVAEIVRTVWEDVGEILWKETEAKCGSQKVEGVGEIQTECGAHTCPFADNGVAASAVDKYKGHCLYVGRNSYLRHCFNLPRGRLYRHGPVNTLGDALEWEENWSDYMNFELTVKVQKIFGPLIASFDVGIAPSTLAEMINNITSLQSRFNEVHSNFTSILFTTKLKTEVYNTDSTI</sequence>
<keyword id="KW-0325">Glycoprotein</keyword>
<keyword id="KW-0732">Signal</keyword>
<protein>
    <recommendedName>
        <fullName>VSG expression site-associated protein 221A</fullName>
    </recommendedName>
    <alternativeName>
        <fullName>ESAG protein</fullName>
    </alternativeName>
</protein>
<reference key="1">
    <citation type="journal article" date="1985" name="Cell">
        <title>Coordinate transcription of variant surface glycoprotein genes and an expression site associated gene family in Trypanosoma brucei.</title>
        <authorList>
            <person name="Cully D.F."/>
            <person name="Ip H.S."/>
            <person name="Cross G.A.M."/>
        </authorList>
    </citation>
    <scope>NUCLEOTIDE SEQUENCE [MRNA]</scope>
</reference>
<organism>
    <name type="scientific">Trypanosoma brucei brucei</name>
    <dbReference type="NCBI Taxonomy" id="5702"/>
    <lineage>
        <taxon>Eukaryota</taxon>
        <taxon>Discoba</taxon>
        <taxon>Euglenozoa</taxon>
        <taxon>Kinetoplastea</taxon>
        <taxon>Metakinetoplastina</taxon>
        <taxon>Trypanosomatida</taxon>
        <taxon>Trypanosomatidae</taxon>
        <taxon>Trypanosoma</taxon>
    </lineage>
</organism>
<dbReference type="EMBL" id="M11452">
    <property type="protein sequence ID" value="AAA30191.1"/>
    <property type="molecule type" value="mRNA"/>
</dbReference>
<dbReference type="PIR" id="A03395">
    <property type="entry name" value="VMUT21"/>
</dbReference>
<dbReference type="SMR" id="P04478"/>
<dbReference type="InterPro" id="IPR004922">
    <property type="entry name" value="ESAG"/>
</dbReference>
<dbReference type="Pfam" id="PF03238">
    <property type="entry name" value="ESAG1"/>
    <property type="match status" value="1"/>
</dbReference>